<proteinExistence type="inferred from homology"/>
<feature type="chain" id="PRO_1000136899" description="UPF0283 membrane protein YcjF">
    <location>
        <begin position="1"/>
        <end position="353"/>
    </location>
</feature>
<feature type="transmembrane region" description="Helical" evidence="1">
    <location>
        <begin position="70"/>
        <end position="90"/>
    </location>
</feature>
<feature type="transmembrane region" description="Helical" evidence="1">
    <location>
        <begin position="100"/>
        <end position="120"/>
    </location>
</feature>
<feature type="transmembrane region" description="Helical" evidence="1">
    <location>
        <begin position="213"/>
        <end position="233"/>
    </location>
</feature>
<feature type="region of interest" description="Disordered" evidence="2">
    <location>
        <begin position="1"/>
        <end position="35"/>
    </location>
</feature>
<feature type="compositionally biased region" description="Basic and acidic residues" evidence="2">
    <location>
        <begin position="1"/>
        <end position="19"/>
    </location>
</feature>
<sequence>MSEPLKPRIDFAEPLKEEPTSAFKAQQTFSEAESRTFAPAAIDERPEDEGVAEAAVDAALRPKRSLWRKMVMGGLALFGASVVGQGVQWTMNAWQTQDWVALGGCAAGALIVGAGVGSVVTEWRRLWRLRQRAHERDEARELLHSHSVGKGRAFCEKLAQQAGIDQSHPVLQRWYAAIHETQNDREIVGLYANLVQPVLDAQARREISRFAAESTLMIAVSPLALVDMAFIAWRNLRLINRIATLYGIELGYYSRLRLFRLVLLNIAFAGASELVREVGMDWMSQDLAARLSTRAAQGIGAGLLTARLGIKAMELCRPLPWIDNDKPRLGDFRRQLIGQLKETLQKSKSSPEK</sequence>
<accession>B5BJ45</accession>
<reference key="1">
    <citation type="journal article" date="2009" name="BMC Genomics">
        <title>Pseudogene accumulation in the evolutionary histories of Salmonella enterica serovars Paratyphi A and Typhi.</title>
        <authorList>
            <person name="Holt K.E."/>
            <person name="Thomson N.R."/>
            <person name="Wain J."/>
            <person name="Langridge G.C."/>
            <person name="Hasan R."/>
            <person name="Bhutta Z.A."/>
            <person name="Quail M.A."/>
            <person name="Norbertczak H."/>
            <person name="Walker D."/>
            <person name="Simmonds M."/>
            <person name="White B."/>
            <person name="Bason N."/>
            <person name="Mungall K."/>
            <person name="Dougan G."/>
            <person name="Parkhill J."/>
        </authorList>
    </citation>
    <scope>NUCLEOTIDE SEQUENCE [LARGE SCALE GENOMIC DNA]</scope>
    <source>
        <strain>AKU_12601</strain>
    </source>
</reference>
<keyword id="KW-0997">Cell inner membrane</keyword>
<keyword id="KW-1003">Cell membrane</keyword>
<keyword id="KW-0472">Membrane</keyword>
<keyword id="KW-0812">Transmembrane</keyword>
<keyword id="KW-1133">Transmembrane helix</keyword>
<name>YCJF_SALPK</name>
<comment type="subcellular location">
    <subcellularLocation>
        <location evidence="1">Cell inner membrane</location>
        <topology evidence="1">Multi-pass membrane protein</topology>
    </subcellularLocation>
</comment>
<comment type="similarity">
    <text evidence="1">Belongs to the UPF0283 family.</text>
</comment>
<gene>
    <name evidence="1" type="primary">ycjF</name>
    <name type="ordered locus">SSPA1115</name>
</gene>
<protein>
    <recommendedName>
        <fullName evidence="1">UPF0283 membrane protein YcjF</fullName>
    </recommendedName>
</protein>
<evidence type="ECO:0000255" key="1">
    <source>
        <dbReference type="HAMAP-Rule" id="MF_01085"/>
    </source>
</evidence>
<evidence type="ECO:0000256" key="2">
    <source>
        <dbReference type="SAM" id="MobiDB-lite"/>
    </source>
</evidence>
<organism>
    <name type="scientific">Salmonella paratyphi A (strain AKU_12601)</name>
    <dbReference type="NCBI Taxonomy" id="554290"/>
    <lineage>
        <taxon>Bacteria</taxon>
        <taxon>Pseudomonadati</taxon>
        <taxon>Pseudomonadota</taxon>
        <taxon>Gammaproteobacteria</taxon>
        <taxon>Enterobacterales</taxon>
        <taxon>Enterobacteriaceae</taxon>
        <taxon>Salmonella</taxon>
    </lineage>
</organism>
<dbReference type="EMBL" id="FM200053">
    <property type="protein sequence ID" value="CAR59273.1"/>
    <property type="molecule type" value="Genomic_DNA"/>
</dbReference>
<dbReference type="RefSeq" id="WP_001294474.1">
    <property type="nucleotide sequence ID" value="NC_011147.1"/>
</dbReference>
<dbReference type="SMR" id="B5BJ45"/>
<dbReference type="KEGG" id="sek:SSPA1115"/>
<dbReference type="HOGENOM" id="CLU_057693_2_0_6"/>
<dbReference type="Proteomes" id="UP000001869">
    <property type="component" value="Chromosome"/>
</dbReference>
<dbReference type="GO" id="GO:0005886">
    <property type="term" value="C:plasma membrane"/>
    <property type="evidence" value="ECO:0007669"/>
    <property type="project" value="UniProtKB-SubCell"/>
</dbReference>
<dbReference type="HAMAP" id="MF_01085">
    <property type="entry name" value="UPF0283"/>
    <property type="match status" value="1"/>
</dbReference>
<dbReference type="InterPro" id="IPR021147">
    <property type="entry name" value="DUF697"/>
</dbReference>
<dbReference type="InterPro" id="IPR006507">
    <property type="entry name" value="UPF0283"/>
</dbReference>
<dbReference type="NCBIfam" id="TIGR01620">
    <property type="entry name" value="hyp_HI0043"/>
    <property type="match status" value="1"/>
</dbReference>
<dbReference type="PANTHER" id="PTHR39342">
    <property type="entry name" value="UPF0283 MEMBRANE PROTEIN YCJF"/>
    <property type="match status" value="1"/>
</dbReference>
<dbReference type="PANTHER" id="PTHR39342:SF1">
    <property type="entry name" value="UPF0283 MEMBRANE PROTEIN YCJF"/>
    <property type="match status" value="1"/>
</dbReference>
<dbReference type="Pfam" id="PF05128">
    <property type="entry name" value="DUF697"/>
    <property type="match status" value="1"/>
</dbReference>